<evidence type="ECO:0000255" key="1">
    <source>
        <dbReference type="HAMAP-Rule" id="MF_01043"/>
    </source>
</evidence>
<organism>
    <name type="scientific">Thermoanaerobacter pseudethanolicus (strain ATCC 33223 / 39E)</name>
    <name type="common">Clostridium thermohydrosulfuricum</name>
    <dbReference type="NCBI Taxonomy" id="340099"/>
    <lineage>
        <taxon>Bacteria</taxon>
        <taxon>Bacillati</taxon>
        <taxon>Bacillota</taxon>
        <taxon>Clostridia</taxon>
        <taxon>Thermoanaerobacterales</taxon>
        <taxon>Thermoanaerobacteraceae</taxon>
        <taxon>Thermoanaerobacter</taxon>
    </lineage>
</organism>
<feature type="chain" id="PRO_1000136129" description="Glycerol-3-phosphate acyltransferase">
    <location>
        <begin position="1"/>
        <end position="198"/>
    </location>
</feature>
<feature type="transmembrane region" description="Helical" evidence="1">
    <location>
        <begin position="2"/>
        <end position="22"/>
    </location>
</feature>
<feature type="transmembrane region" description="Helical" evidence="1">
    <location>
        <begin position="48"/>
        <end position="70"/>
    </location>
</feature>
<feature type="transmembrane region" description="Helical" evidence="1">
    <location>
        <begin position="75"/>
        <end position="97"/>
    </location>
</feature>
<feature type="transmembrane region" description="Helical" evidence="1">
    <location>
        <begin position="111"/>
        <end position="131"/>
    </location>
</feature>
<feature type="transmembrane region" description="Helical" evidence="1">
    <location>
        <begin position="154"/>
        <end position="174"/>
    </location>
</feature>
<sequence>MYAVLTAIIAYLIGCINNAYILTKYTRKIDIRNYGSGNAGATNVLRVLGYKAAAPVFALDVLKGVIAVLIGKYLMGNTGAMIAGIAVVCGHNWPVFLKFRGGKGIATSVGVVMTVSPLLGLIALAIGVTVIVLTKYVSLGSITGSVTFVLLNAIFWNSTQIFIFSLILASLAIFQHRSNIKRLLAGTESKLGQKTEIK</sequence>
<keyword id="KW-1003">Cell membrane</keyword>
<keyword id="KW-0444">Lipid biosynthesis</keyword>
<keyword id="KW-0443">Lipid metabolism</keyword>
<keyword id="KW-0472">Membrane</keyword>
<keyword id="KW-0594">Phospholipid biosynthesis</keyword>
<keyword id="KW-1208">Phospholipid metabolism</keyword>
<keyword id="KW-1185">Reference proteome</keyword>
<keyword id="KW-0808">Transferase</keyword>
<keyword id="KW-0812">Transmembrane</keyword>
<keyword id="KW-1133">Transmembrane helix</keyword>
<proteinExistence type="inferred from homology"/>
<name>PLSY_THEP3</name>
<gene>
    <name evidence="1" type="primary">plsY</name>
    <name type="ordered locus">Teth39_0840</name>
</gene>
<accession>B0K8N4</accession>
<protein>
    <recommendedName>
        <fullName evidence="1">Glycerol-3-phosphate acyltransferase</fullName>
    </recommendedName>
    <alternativeName>
        <fullName evidence="1">Acyl-PO4 G3P acyltransferase</fullName>
    </alternativeName>
    <alternativeName>
        <fullName evidence="1">Acyl-phosphate--glycerol-3-phosphate acyltransferase</fullName>
    </alternativeName>
    <alternativeName>
        <fullName evidence="1">G3P acyltransferase</fullName>
        <shortName evidence="1">GPAT</shortName>
        <ecNumber evidence="1">2.3.1.275</ecNumber>
    </alternativeName>
    <alternativeName>
        <fullName evidence="1">Lysophosphatidic acid synthase</fullName>
        <shortName evidence="1">LPA synthase</shortName>
    </alternativeName>
</protein>
<dbReference type="EC" id="2.3.1.275" evidence="1"/>
<dbReference type="EMBL" id="CP000924">
    <property type="protein sequence ID" value="ABY94497.1"/>
    <property type="molecule type" value="Genomic_DNA"/>
</dbReference>
<dbReference type="RefSeq" id="WP_003867956.1">
    <property type="nucleotide sequence ID" value="NC_010321.1"/>
</dbReference>
<dbReference type="SMR" id="B0K8N4"/>
<dbReference type="STRING" id="340099.Teth39_0840"/>
<dbReference type="KEGG" id="tpd:Teth39_0840"/>
<dbReference type="eggNOG" id="COG0344">
    <property type="taxonomic scope" value="Bacteria"/>
</dbReference>
<dbReference type="HOGENOM" id="CLU_081254_7_1_9"/>
<dbReference type="UniPathway" id="UPA00085"/>
<dbReference type="Proteomes" id="UP000002156">
    <property type="component" value="Chromosome"/>
</dbReference>
<dbReference type="GO" id="GO:0005886">
    <property type="term" value="C:plasma membrane"/>
    <property type="evidence" value="ECO:0007669"/>
    <property type="project" value="UniProtKB-SubCell"/>
</dbReference>
<dbReference type="GO" id="GO:0043772">
    <property type="term" value="F:acyl-phosphate glycerol-3-phosphate acyltransferase activity"/>
    <property type="evidence" value="ECO:0007669"/>
    <property type="project" value="UniProtKB-UniRule"/>
</dbReference>
<dbReference type="GO" id="GO:0008654">
    <property type="term" value="P:phospholipid biosynthetic process"/>
    <property type="evidence" value="ECO:0007669"/>
    <property type="project" value="UniProtKB-UniRule"/>
</dbReference>
<dbReference type="HAMAP" id="MF_01043">
    <property type="entry name" value="PlsY"/>
    <property type="match status" value="1"/>
</dbReference>
<dbReference type="InterPro" id="IPR003811">
    <property type="entry name" value="G3P_acylTferase_PlsY"/>
</dbReference>
<dbReference type="NCBIfam" id="TIGR00023">
    <property type="entry name" value="glycerol-3-phosphate 1-O-acyltransferase PlsY"/>
    <property type="match status" value="1"/>
</dbReference>
<dbReference type="PANTHER" id="PTHR30309:SF0">
    <property type="entry name" value="GLYCEROL-3-PHOSPHATE ACYLTRANSFERASE-RELATED"/>
    <property type="match status" value="1"/>
</dbReference>
<dbReference type="PANTHER" id="PTHR30309">
    <property type="entry name" value="INNER MEMBRANE PROTEIN YGIH"/>
    <property type="match status" value="1"/>
</dbReference>
<dbReference type="Pfam" id="PF02660">
    <property type="entry name" value="G3P_acyltransf"/>
    <property type="match status" value="1"/>
</dbReference>
<dbReference type="SMART" id="SM01207">
    <property type="entry name" value="G3P_acyltransf"/>
    <property type="match status" value="1"/>
</dbReference>
<comment type="function">
    <text evidence="1">Catalyzes the transfer of an acyl group from acyl-phosphate (acyl-PO(4)) to glycerol-3-phosphate (G3P) to form lysophosphatidic acid (LPA). This enzyme utilizes acyl-phosphate as fatty acyl donor, but not acyl-CoA or acyl-ACP.</text>
</comment>
<comment type="catalytic activity">
    <reaction evidence="1">
        <text>an acyl phosphate + sn-glycerol 3-phosphate = a 1-acyl-sn-glycero-3-phosphate + phosphate</text>
        <dbReference type="Rhea" id="RHEA:34075"/>
        <dbReference type="ChEBI" id="CHEBI:43474"/>
        <dbReference type="ChEBI" id="CHEBI:57597"/>
        <dbReference type="ChEBI" id="CHEBI:57970"/>
        <dbReference type="ChEBI" id="CHEBI:59918"/>
        <dbReference type="EC" id="2.3.1.275"/>
    </reaction>
</comment>
<comment type="pathway">
    <text evidence="1">Lipid metabolism; phospholipid metabolism.</text>
</comment>
<comment type="subunit">
    <text evidence="1">Probably interacts with PlsX.</text>
</comment>
<comment type="subcellular location">
    <subcellularLocation>
        <location evidence="1">Cell membrane</location>
        <topology evidence="1">Multi-pass membrane protein</topology>
    </subcellularLocation>
</comment>
<comment type="similarity">
    <text evidence="1">Belongs to the PlsY family.</text>
</comment>
<reference key="1">
    <citation type="submission" date="2008-01" db="EMBL/GenBank/DDBJ databases">
        <title>Complete sequence of Thermoanaerobacter pseudethanolicus 39E.</title>
        <authorList>
            <person name="Copeland A."/>
            <person name="Lucas S."/>
            <person name="Lapidus A."/>
            <person name="Barry K."/>
            <person name="Glavina del Rio T."/>
            <person name="Dalin E."/>
            <person name="Tice H."/>
            <person name="Pitluck S."/>
            <person name="Bruce D."/>
            <person name="Goodwin L."/>
            <person name="Saunders E."/>
            <person name="Brettin T."/>
            <person name="Detter J.C."/>
            <person name="Han C."/>
            <person name="Schmutz J."/>
            <person name="Larimer F."/>
            <person name="Land M."/>
            <person name="Hauser L."/>
            <person name="Kyrpides N."/>
            <person name="Lykidis A."/>
            <person name="Hemme C."/>
            <person name="Fields M.W."/>
            <person name="He Z."/>
            <person name="Zhou J."/>
            <person name="Richardson P."/>
        </authorList>
    </citation>
    <scope>NUCLEOTIDE SEQUENCE [LARGE SCALE GENOMIC DNA]</scope>
    <source>
        <strain>ATCC 33223 / DSM 2355 / 39E</strain>
    </source>
</reference>